<gene>
    <name evidence="2" type="primary">eif2g</name>
    <name type="ordered locus">PF1717</name>
</gene>
<proteinExistence type="evidence at protein level"/>
<accession>Q8U082</accession>
<evidence type="ECO:0000250" key="1">
    <source>
        <dbReference type="UniProtKB" id="Q980A5"/>
    </source>
</evidence>
<evidence type="ECO:0000255" key="2">
    <source>
        <dbReference type="HAMAP-Rule" id="MF_00119"/>
    </source>
</evidence>
<evidence type="ECO:0000269" key="3">
    <source>
    </source>
</evidence>
<evidence type="ECO:0007744" key="4">
    <source>
        <dbReference type="PDB" id="2D74"/>
    </source>
</evidence>
<evidence type="ECO:0007744" key="5">
    <source>
        <dbReference type="PDB" id="2DCU"/>
    </source>
</evidence>
<evidence type="ECO:0007829" key="6">
    <source>
        <dbReference type="PDB" id="2D74"/>
    </source>
</evidence>
<evidence type="ECO:0007829" key="7">
    <source>
        <dbReference type="PDB" id="2DCU"/>
    </source>
</evidence>
<organism>
    <name type="scientific">Pyrococcus furiosus (strain ATCC 43587 / DSM 3638 / JCM 8422 / Vc1)</name>
    <dbReference type="NCBI Taxonomy" id="186497"/>
    <lineage>
        <taxon>Archaea</taxon>
        <taxon>Methanobacteriati</taxon>
        <taxon>Methanobacteriota</taxon>
        <taxon>Thermococci</taxon>
        <taxon>Thermococcales</taxon>
        <taxon>Thermococcaceae</taxon>
        <taxon>Pyrococcus</taxon>
    </lineage>
</organism>
<protein>
    <recommendedName>
        <fullName evidence="2">Translation initiation factor 2 subunit gamma</fullName>
        <ecNumber evidence="2">3.6.5.3</ecNumber>
    </recommendedName>
    <alternativeName>
        <fullName evidence="2">aIF2-gamma</fullName>
    </alternativeName>
    <alternativeName>
        <fullName evidence="2">eIF-2-gamma</fullName>
    </alternativeName>
</protein>
<comment type="function">
    <text evidence="2">eIF-2 functions in the early steps of protein synthesis by forming a ternary complex with GTP and initiator tRNA.</text>
</comment>
<comment type="catalytic activity">
    <reaction evidence="2">
        <text>GTP + H2O = GDP + phosphate + H(+)</text>
        <dbReference type="Rhea" id="RHEA:19669"/>
        <dbReference type="ChEBI" id="CHEBI:15377"/>
        <dbReference type="ChEBI" id="CHEBI:15378"/>
        <dbReference type="ChEBI" id="CHEBI:37565"/>
        <dbReference type="ChEBI" id="CHEBI:43474"/>
        <dbReference type="ChEBI" id="CHEBI:58189"/>
        <dbReference type="EC" id="3.6.5.3"/>
    </reaction>
</comment>
<comment type="cofactor">
    <cofactor evidence="2 3">
        <name>Mg(2+)</name>
        <dbReference type="ChEBI" id="CHEBI:18420"/>
    </cofactor>
</comment>
<comment type="subunit">
    <text evidence="2">Heterotrimer composed of an alpha, a beta and a gamma chain.</text>
</comment>
<comment type="interaction">
    <interactant intactId="EBI-2504997">
        <id>Q8U082</id>
    </interactant>
    <interactant intactId="EBI-2505077">
        <id>Q8U3I5</id>
        <label>eif2b</label>
    </interactant>
    <organismsDiffer>false</organismsDiffer>
    <experiments>2</experiments>
</comment>
<comment type="similarity">
    <text evidence="2">Belongs to the TRAFAC class translation factor GTPase superfamily. Classic translation factor GTPase family. EIF2G subfamily.</text>
</comment>
<sequence>MGEKRKTRQAEVNIGMVGHVDHGKTTLTKALTGVWTDTHSEELRRGITIKIGFADAEIRRCSNCGRYSTSPICPYCGHETEFIRRVSFIDSPGHEALMTTMLAGASLMDGAILVIAANEPCPRPQTREHLMALQIIGQKNIIIAQNKIELVDKEKALENYRQIKEFIKGTVAENAPIIPISALHGANIDVLVKAIEEFIPTPKRDSNKPPKMLVLRSFDVNKPGTPPEKLVGGVLGGSIVQGKLKVGDEIEIRPGVPYEEHGRIKYEPITTEIVSLQAGGQFVEEAYPGGLVGIGTKLDPYLTKGDLMAGNVVGKPGKLPPVWTDLRLEVHLLERVVGTEQELNVEPIKRKEVLLLNVGTARTMGLVTALGKDEIELKLQIPVCAEPGERVAISRQIGSRWRLIGYGIIKE</sequence>
<reference key="1">
    <citation type="journal article" date="1999" name="Genetics">
        <title>Divergence of the hyperthermophilic archaea Pyrococcus furiosus and P. horikoshii inferred from complete genomic sequences.</title>
        <authorList>
            <person name="Maeder D.L."/>
            <person name="Weiss R.B."/>
            <person name="Dunn D.M."/>
            <person name="Cherry J.L."/>
            <person name="Gonzalez J.M."/>
            <person name="DiRuggiero J."/>
            <person name="Robb F.T."/>
        </authorList>
    </citation>
    <scope>NUCLEOTIDE SEQUENCE [LARGE SCALE GENOMIC DNA]</scope>
    <source>
        <strain>ATCC 43587 / DSM 3638 / JCM 8422 / Vc1</strain>
    </source>
</reference>
<reference evidence="4 5" key="2">
    <citation type="journal article" date="2006" name="Proc. Natl. Acad. Sci. U.S.A.">
        <title>Structure of archaeal translational initiation factor 2 betagamma-GDP reveals significant conformational change of the beta-subunit and switch 1 region.</title>
        <authorList>
            <person name="Sokabe M."/>
            <person name="Yao M."/>
            <person name="Sakai N."/>
            <person name="Toya S."/>
            <person name="Tanaka I."/>
        </authorList>
    </citation>
    <scope>X-RAY CRYSTALLOGRAPHY (2.80 ANGSTROMS) IN COMPLEX WITH GTP; MAGNESIUM AND ZINC</scope>
</reference>
<name>IF2G_PYRFU</name>
<keyword id="KW-0002">3D-structure</keyword>
<keyword id="KW-0342">GTP-binding</keyword>
<keyword id="KW-0378">Hydrolase</keyword>
<keyword id="KW-0396">Initiation factor</keyword>
<keyword id="KW-0460">Magnesium</keyword>
<keyword id="KW-0479">Metal-binding</keyword>
<keyword id="KW-0547">Nucleotide-binding</keyword>
<keyword id="KW-0648">Protein biosynthesis</keyword>
<keyword id="KW-1185">Reference proteome</keyword>
<keyword id="KW-0862">Zinc</keyword>
<dbReference type="EC" id="3.6.5.3" evidence="2"/>
<dbReference type="EMBL" id="AE009950">
    <property type="protein sequence ID" value="AAL81841.1"/>
    <property type="molecule type" value="Genomic_DNA"/>
</dbReference>
<dbReference type="RefSeq" id="WP_011012863.1">
    <property type="nucleotide sequence ID" value="NZ_CP023154.1"/>
</dbReference>
<dbReference type="PDB" id="2D74">
    <property type="method" value="X-ray"/>
    <property type="resolution" value="2.80 A"/>
    <property type="chains" value="A=1-411"/>
</dbReference>
<dbReference type="PDB" id="2DCU">
    <property type="method" value="X-ray"/>
    <property type="resolution" value="3.40 A"/>
    <property type="chains" value="A=1-411"/>
</dbReference>
<dbReference type="PDBsum" id="2D74"/>
<dbReference type="PDBsum" id="2DCU"/>
<dbReference type="SMR" id="Q8U082"/>
<dbReference type="DIP" id="DIP-54412N"/>
<dbReference type="IntAct" id="Q8U082">
    <property type="interactions" value="2"/>
</dbReference>
<dbReference type="STRING" id="186497.PF1717"/>
<dbReference type="PaxDb" id="186497-PF1717"/>
<dbReference type="KEGG" id="pfu:PF1717"/>
<dbReference type="PATRIC" id="fig|186497.12.peg.1785"/>
<dbReference type="eggNOG" id="arCOG01563">
    <property type="taxonomic scope" value="Archaea"/>
</dbReference>
<dbReference type="HOGENOM" id="CLU_027154_0_1_2"/>
<dbReference type="OrthoDB" id="7798at2157"/>
<dbReference type="PhylomeDB" id="Q8U082"/>
<dbReference type="EvolutionaryTrace" id="Q8U082"/>
<dbReference type="Proteomes" id="UP000001013">
    <property type="component" value="Chromosome"/>
</dbReference>
<dbReference type="GO" id="GO:0005829">
    <property type="term" value="C:cytosol"/>
    <property type="evidence" value="ECO:0007669"/>
    <property type="project" value="TreeGrafter"/>
</dbReference>
<dbReference type="GO" id="GO:0005525">
    <property type="term" value="F:GTP binding"/>
    <property type="evidence" value="ECO:0007669"/>
    <property type="project" value="UniProtKB-UniRule"/>
</dbReference>
<dbReference type="GO" id="GO:0003924">
    <property type="term" value="F:GTPase activity"/>
    <property type="evidence" value="ECO:0007669"/>
    <property type="project" value="InterPro"/>
</dbReference>
<dbReference type="GO" id="GO:0046872">
    <property type="term" value="F:metal ion binding"/>
    <property type="evidence" value="ECO:0007669"/>
    <property type="project" value="UniProtKB-KW"/>
</dbReference>
<dbReference type="GO" id="GO:0003746">
    <property type="term" value="F:translation elongation factor activity"/>
    <property type="evidence" value="ECO:0007669"/>
    <property type="project" value="UniProtKB-UniRule"/>
</dbReference>
<dbReference type="GO" id="GO:0003743">
    <property type="term" value="F:translation initiation factor activity"/>
    <property type="evidence" value="ECO:0007669"/>
    <property type="project" value="UniProtKB-KW"/>
</dbReference>
<dbReference type="GO" id="GO:0000049">
    <property type="term" value="F:tRNA binding"/>
    <property type="evidence" value="ECO:0007669"/>
    <property type="project" value="InterPro"/>
</dbReference>
<dbReference type="GO" id="GO:0001731">
    <property type="term" value="P:formation of translation preinitiation complex"/>
    <property type="evidence" value="ECO:0007669"/>
    <property type="project" value="TreeGrafter"/>
</dbReference>
<dbReference type="CDD" id="cd01888">
    <property type="entry name" value="eIF2_gamma"/>
    <property type="match status" value="1"/>
</dbReference>
<dbReference type="CDD" id="cd03688">
    <property type="entry name" value="eIF2_gamma_II"/>
    <property type="match status" value="1"/>
</dbReference>
<dbReference type="CDD" id="cd15490">
    <property type="entry name" value="eIF2_gamma_III"/>
    <property type="match status" value="1"/>
</dbReference>
<dbReference type="FunFam" id="2.40.30.10:FF:000009">
    <property type="entry name" value="Eukaryotic translation initiation factor 2 subunit gamma"/>
    <property type="match status" value="1"/>
</dbReference>
<dbReference type="FunFam" id="3.40.50.300:FF:000065">
    <property type="entry name" value="Eukaryotic translation initiation factor 2 subunit gamma"/>
    <property type="match status" value="1"/>
</dbReference>
<dbReference type="FunFam" id="2.40.30.10:FF:000075">
    <property type="entry name" value="Translation initiation factor 2 subunit gamma"/>
    <property type="match status" value="1"/>
</dbReference>
<dbReference type="Gene3D" id="3.40.50.300">
    <property type="entry name" value="P-loop containing nucleotide triphosphate hydrolases"/>
    <property type="match status" value="1"/>
</dbReference>
<dbReference type="Gene3D" id="2.40.30.10">
    <property type="entry name" value="Translation factors"/>
    <property type="match status" value="2"/>
</dbReference>
<dbReference type="HAMAP" id="MF_00119">
    <property type="entry name" value="eIF_2_gamma"/>
    <property type="match status" value="1"/>
</dbReference>
<dbReference type="InterPro" id="IPR004161">
    <property type="entry name" value="EFTu-like_2"/>
</dbReference>
<dbReference type="InterPro" id="IPR050543">
    <property type="entry name" value="eIF2G"/>
</dbReference>
<dbReference type="InterPro" id="IPR015256">
    <property type="entry name" value="eIF2g_C"/>
</dbReference>
<dbReference type="InterPro" id="IPR044127">
    <property type="entry name" value="eIF2g_dom_2"/>
</dbReference>
<dbReference type="InterPro" id="IPR044128">
    <property type="entry name" value="eIF2g_GTP-bd"/>
</dbReference>
<dbReference type="InterPro" id="IPR027417">
    <property type="entry name" value="P-loop_NTPase"/>
</dbReference>
<dbReference type="InterPro" id="IPR005225">
    <property type="entry name" value="Small_GTP-bd"/>
</dbReference>
<dbReference type="InterPro" id="IPR000795">
    <property type="entry name" value="T_Tr_GTP-bd_dom"/>
</dbReference>
<dbReference type="InterPro" id="IPR022424">
    <property type="entry name" value="TIF2_gsu"/>
</dbReference>
<dbReference type="InterPro" id="IPR009000">
    <property type="entry name" value="Transl_B-barrel_sf"/>
</dbReference>
<dbReference type="InterPro" id="IPR009001">
    <property type="entry name" value="Transl_elong_EF1A/Init_IF2_C"/>
</dbReference>
<dbReference type="NCBIfam" id="TIGR03680">
    <property type="entry name" value="eif2g_arch"/>
    <property type="match status" value="1"/>
</dbReference>
<dbReference type="NCBIfam" id="NF003077">
    <property type="entry name" value="PRK04000.1"/>
    <property type="match status" value="1"/>
</dbReference>
<dbReference type="NCBIfam" id="TIGR00231">
    <property type="entry name" value="small_GTP"/>
    <property type="match status" value="1"/>
</dbReference>
<dbReference type="PANTHER" id="PTHR42854">
    <property type="entry name" value="EUKARYOTIC TRANSLATION INITIATION FACTOR 2 SUBUNIT 3 FAMILY MEMBER"/>
    <property type="match status" value="1"/>
</dbReference>
<dbReference type="PANTHER" id="PTHR42854:SF3">
    <property type="entry name" value="EUKARYOTIC TRANSLATION INITIATION FACTOR 2 SUBUNIT 3-RELATED"/>
    <property type="match status" value="1"/>
</dbReference>
<dbReference type="Pfam" id="PF09173">
    <property type="entry name" value="eIF2_C"/>
    <property type="match status" value="1"/>
</dbReference>
<dbReference type="Pfam" id="PF00009">
    <property type="entry name" value="GTP_EFTU"/>
    <property type="match status" value="1"/>
</dbReference>
<dbReference type="Pfam" id="PF03144">
    <property type="entry name" value="GTP_EFTU_D2"/>
    <property type="match status" value="1"/>
</dbReference>
<dbReference type="PRINTS" id="PR00315">
    <property type="entry name" value="ELONGATNFCT"/>
</dbReference>
<dbReference type="SUPFAM" id="SSF50465">
    <property type="entry name" value="EF-Tu/eEF-1alpha/eIF2-gamma C-terminal domain"/>
    <property type="match status" value="1"/>
</dbReference>
<dbReference type="SUPFAM" id="SSF52540">
    <property type="entry name" value="P-loop containing nucleoside triphosphate hydrolases"/>
    <property type="match status" value="1"/>
</dbReference>
<dbReference type="SUPFAM" id="SSF50447">
    <property type="entry name" value="Translation proteins"/>
    <property type="match status" value="1"/>
</dbReference>
<dbReference type="PROSITE" id="PS51722">
    <property type="entry name" value="G_TR_2"/>
    <property type="match status" value="1"/>
</dbReference>
<feature type="chain" id="PRO_0000137460" description="Translation initiation factor 2 subunit gamma">
    <location>
        <begin position="1"/>
        <end position="411"/>
    </location>
</feature>
<feature type="domain" description="tr-type G" evidence="2">
    <location>
        <begin position="9"/>
        <end position="203"/>
    </location>
</feature>
<feature type="region of interest" description="G1" evidence="1">
    <location>
        <begin position="18"/>
        <end position="25"/>
    </location>
</feature>
<feature type="region of interest" description="G2" evidence="1">
    <location>
        <begin position="46"/>
        <end position="50"/>
    </location>
</feature>
<feature type="region of interest" description="G3" evidence="1">
    <location>
        <begin position="90"/>
        <end position="93"/>
    </location>
</feature>
<feature type="region of interest" description="G4" evidence="1">
    <location>
        <begin position="146"/>
        <end position="149"/>
    </location>
</feature>
<feature type="region of interest" description="G5" evidence="1">
    <location>
        <begin position="181"/>
        <end position="183"/>
    </location>
</feature>
<feature type="binding site" evidence="2 3 5">
    <location>
        <begin position="21"/>
        <end position="26"/>
    </location>
    <ligand>
        <name>GTP</name>
        <dbReference type="ChEBI" id="CHEBI:37565"/>
    </ligand>
</feature>
<feature type="binding site" evidence="1 2">
    <location>
        <position position="21"/>
    </location>
    <ligand>
        <name>Mg(2+)</name>
        <dbReference type="ChEBI" id="CHEBI:18420"/>
        <label>2</label>
    </ligand>
</feature>
<feature type="binding site" evidence="2 3 5">
    <location>
        <position position="25"/>
    </location>
    <ligand>
        <name>Mg(2+)</name>
        <dbReference type="ChEBI" id="CHEBI:18420"/>
        <label>1</label>
    </ligand>
</feature>
<feature type="binding site" evidence="1 2">
    <location>
        <position position="46"/>
    </location>
    <ligand>
        <name>Mg(2+)</name>
        <dbReference type="ChEBI" id="CHEBI:18420"/>
        <label>2</label>
    </ligand>
</feature>
<feature type="binding site" evidence="1 2">
    <location>
        <position position="48"/>
    </location>
    <ligand>
        <name>Mg(2+)</name>
        <dbReference type="ChEBI" id="CHEBI:18420"/>
        <label>1</label>
    </ligand>
</feature>
<feature type="binding site" evidence="2 3 4 5">
    <location>
        <position position="61"/>
    </location>
    <ligand>
        <name>Zn(2+)</name>
        <dbReference type="ChEBI" id="CHEBI:29105"/>
    </ligand>
</feature>
<feature type="binding site" evidence="2 3 4 5">
    <location>
        <position position="64"/>
    </location>
    <ligand>
        <name>Zn(2+)</name>
        <dbReference type="ChEBI" id="CHEBI:29105"/>
    </ligand>
</feature>
<feature type="binding site" evidence="2 3 4 5">
    <location>
        <position position="73"/>
    </location>
    <ligand>
        <name>Zn(2+)</name>
        <dbReference type="ChEBI" id="CHEBI:29105"/>
    </ligand>
</feature>
<feature type="binding site" evidence="2 3 4 5">
    <location>
        <position position="76"/>
    </location>
    <ligand>
        <name>Zn(2+)</name>
        <dbReference type="ChEBI" id="CHEBI:29105"/>
    </ligand>
</feature>
<feature type="binding site" evidence="2 3 5">
    <location>
        <begin position="146"/>
        <end position="149"/>
    </location>
    <ligand>
        <name>GTP</name>
        <dbReference type="ChEBI" id="CHEBI:37565"/>
    </ligand>
</feature>
<feature type="binding site" evidence="2 3 5">
    <location>
        <begin position="181"/>
        <end position="183"/>
    </location>
    <ligand>
        <name>GTP</name>
        <dbReference type="ChEBI" id="CHEBI:37565"/>
    </ligand>
</feature>
<feature type="strand" evidence="6">
    <location>
        <begin position="13"/>
        <end position="18"/>
    </location>
</feature>
<feature type="turn" evidence="6">
    <location>
        <begin position="20"/>
        <end position="23"/>
    </location>
</feature>
<feature type="helix" evidence="6">
    <location>
        <begin position="24"/>
        <end position="32"/>
    </location>
</feature>
<feature type="helix" evidence="6">
    <location>
        <begin position="33"/>
        <end position="35"/>
    </location>
</feature>
<feature type="strand" evidence="6">
    <location>
        <begin position="47"/>
        <end position="49"/>
    </location>
</feature>
<feature type="strand" evidence="6">
    <location>
        <begin position="52"/>
        <end position="61"/>
    </location>
</feature>
<feature type="turn" evidence="6">
    <location>
        <begin position="62"/>
        <end position="64"/>
    </location>
</feature>
<feature type="strand" evidence="6">
    <location>
        <begin position="67"/>
        <end position="72"/>
    </location>
</feature>
<feature type="strand" evidence="6">
    <location>
        <begin position="74"/>
        <end position="76"/>
    </location>
</feature>
<feature type="strand" evidence="6">
    <location>
        <begin position="79"/>
        <end position="90"/>
    </location>
</feature>
<feature type="helix" evidence="6">
    <location>
        <begin position="94"/>
        <end position="103"/>
    </location>
</feature>
<feature type="turn" evidence="6">
    <location>
        <begin position="104"/>
        <end position="106"/>
    </location>
</feature>
<feature type="strand" evidence="6">
    <location>
        <begin position="109"/>
        <end position="116"/>
    </location>
</feature>
<feature type="helix" evidence="6">
    <location>
        <begin position="124"/>
        <end position="135"/>
    </location>
</feature>
<feature type="strand" evidence="6">
    <location>
        <begin position="141"/>
        <end position="146"/>
    </location>
</feature>
<feature type="helix" evidence="6">
    <location>
        <begin position="148"/>
        <end position="150"/>
    </location>
</feature>
<feature type="helix" evidence="6">
    <location>
        <begin position="153"/>
        <end position="167"/>
    </location>
</feature>
<feature type="turn" evidence="6">
    <location>
        <begin position="171"/>
        <end position="174"/>
    </location>
</feature>
<feature type="strand" evidence="6">
    <location>
        <begin position="177"/>
        <end position="181"/>
    </location>
</feature>
<feature type="turn" evidence="6">
    <location>
        <begin position="182"/>
        <end position="185"/>
    </location>
</feature>
<feature type="helix" evidence="6">
    <location>
        <begin position="188"/>
        <end position="197"/>
    </location>
</feature>
<feature type="strand" evidence="6">
    <location>
        <begin position="211"/>
        <end position="218"/>
    </location>
</feature>
<feature type="strand" evidence="6">
    <location>
        <begin position="234"/>
        <end position="242"/>
    </location>
</feature>
<feature type="strand" evidence="6">
    <location>
        <begin position="249"/>
        <end position="254"/>
    </location>
</feature>
<feature type="strand" evidence="6">
    <location>
        <begin position="260"/>
        <end position="264"/>
    </location>
</feature>
<feature type="strand" evidence="6">
    <location>
        <begin position="270"/>
        <end position="278"/>
    </location>
</feature>
<feature type="strand" evidence="7">
    <location>
        <begin position="279"/>
        <end position="282"/>
    </location>
</feature>
<feature type="strand" evidence="6">
    <location>
        <begin position="284"/>
        <end position="286"/>
    </location>
</feature>
<feature type="strand" evidence="6">
    <location>
        <begin position="288"/>
        <end position="290"/>
    </location>
</feature>
<feature type="strand" evidence="6">
    <location>
        <begin position="292"/>
        <end position="298"/>
    </location>
</feature>
<feature type="helix" evidence="6">
    <location>
        <begin position="300"/>
        <end position="303"/>
    </location>
</feature>
<feature type="helix" evidence="6">
    <location>
        <begin position="304"/>
        <end position="306"/>
    </location>
</feature>
<feature type="strand" evidence="6">
    <location>
        <begin position="312"/>
        <end position="315"/>
    </location>
</feature>
<feature type="strand" evidence="6">
    <location>
        <begin position="322"/>
        <end position="328"/>
    </location>
</feature>
<feature type="helix" evidence="6">
    <location>
        <begin position="340"/>
        <end position="343"/>
    </location>
</feature>
<feature type="strand" evidence="6">
    <location>
        <begin position="353"/>
        <end position="358"/>
    </location>
</feature>
<feature type="strand" evidence="6">
    <location>
        <begin position="361"/>
        <end position="370"/>
    </location>
</feature>
<feature type="strand" evidence="6">
    <location>
        <begin position="375"/>
        <end position="384"/>
    </location>
</feature>
<feature type="strand" evidence="6">
    <location>
        <begin position="390"/>
        <end position="395"/>
    </location>
</feature>
<feature type="strand" evidence="6">
    <location>
        <begin position="402"/>
        <end position="409"/>
    </location>
</feature>